<feature type="signal peptide" evidence="2">
    <location>
        <begin position="1"/>
        <end position="19"/>
    </location>
</feature>
<feature type="chain" id="PRO_0000358942" description="S-norcoclaurine synthase 2">
    <location>
        <begin position="20"/>
        <end position="196"/>
    </location>
</feature>
<feature type="active site" description="Proton donor" evidence="1">
    <location>
        <position position="118"/>
    </location>
</feature>
<feature type="binding site" evidence="1">
    <location>
        <begin position="104"/>
        <end position="106"/>
    </location>
    <ligand>
        <name>dopamine</name>
        <dbReference type="ChEBI" id="CHEBI:59905"/>
    </ligand>
</feature>
<feature type="binding site" evidence="1">
    <location>
        <position position="137"/>
    </location>
    <ligand>
        <name>(4-hydroxyphenyl)acetaldehyde</name>
        <dbReference type="ChEBI" id="CHEBI:15621"/>
    </ligand>
</feature>
<dbReference type="EC" id="3.5.99.14" evidence="1"/>
<dbReference type="EMBL" id="AB267399">
    <property type="protein sequence ID" value="BAF45338.2"/>
    <property type="molecule type" value="mRNA"/>
</dbReference>
<dbReference type="SMR" id="A2A1A1"/>
<dbReference type="BRENDA" id="4.2.1.78">
    <property type="organism ID" value="1610"/>
</dbReference>
<dbReference type="GO" id="GO:0005737">
    <property type="term" value="C:cytoplasm"/>
    <property type="evidence" value="ECO:0007669"/>
    <property type="project" value="TreeGrafter"/>
</dbReference>
<dbReference type="GO" id="GO:0005634">
    <property type="term" value="C:nucleus"/>
    <property type="evidence" value="ECO:0007669"/>
    <property type="project" value="TreeGrafter"/>
</dbReference>
<dbReference type="GO" id="GO:0050474">
    <property type="term" value="F:(S)-norcoclaurine synthase activity"/>
    <property type="evidence" value="ECO:0007669"/>
    <property type="project" value="RHEA"/>
</dbReference>
<dbReference type="GO" id="GO:0010427">
    <property type="term" value="F:abscisic acid binding"/>
    <property type="evidence" value="ECO:0007669"/>
    <property type="project" value="TreeGrafter"/>
</dbReference>
<dbReference type="GO" id="GO:0004864">
    <property type="term" value="F:protein phosphatase inhibitor activity"/>
    <property type="evidence" value="ECO:0007669"/>
    <property type="project" value="TreeGrafter"/>
</dbReference>
<dbReference type="GO" id="GO:0038023">
    <property type="term" value="F:signaling receptor activity"/>
    <property type="evidence" value="ECO:0007669"/>
    <property type="project" value="TreeGrafter"/>
</dbReference>
<dbReference type="GO" id="GO:0009738">
    <property type="term" value="P:abscisic acid-activated signaling pathway"/>
    <property type="evidence" value="ECO:0007669"/>
    <property type="project" value="TreeGrafter"/>
</dbReference>
<dbReference type="GO" id="GO:0009820">
    <property type="term" value="P:alkaloid metabolic process"/>
    <property type="evidence" value="ECO:0007669"/>
    <property type="project" value="UniProtKB-KW"/>
</dbReference>
<dbReference type="GO" id="GO:0006952">
    <property type="term" value="P:defense response"/>
    <property type="evidence" value="ECO:0007669"/>
    <property type="project" value="InterPro"/>
</dbReference>
<dbReference type="CDD" id="cd07816">
    <property type="entry name" value="Bet_v1-like"/>
    <property type="match status" value="1"/>
</dbReference>
<dbReference type="Gene3D" id="3.30.530.20">
    <property type="match status" value="1"/>
</dbReference>
<dbReference type="InterPro" id="IPR000916">
    <property type="entry name" value="Bet_v_I/MLP"/>
</dbReference>
<dbReference type="InterPro" id="IPR050279">
    <property type="entry name" value="Plant_def-hormone_signal"/>
</dbReference>
<dbReference type="InterPro" id="IPR023393">
    <property type="entry name" value="START-like_dom_sf"/>
</dbReference>
<dbReference type="PANTHER" id="PTHR31213:SF19">
    <property type="entry name" value="BET V I_MAJOR LATEX PROTEIN DOMAIN-CONTAINING PROTEIN"/>
    <property type="match status" value="1"/>
</dbReference>
<dbReference type="PANTHER" id="PTHR31213">
    <property type="entry name" value="OS08G0374000 PROTEIN-RELATED"/>
    <property type="match status" value="1"/>
</dbReference>
<dbReference type="Pfam" id="PF00407">
    <property type="entry name" value="Bet_v_1"/>
    <property type="match status" value="1"/>
</dbReference>
<dbReference type="SUPFAM" id="SSF55961">
    <property type="entry name" value="Bet v1-like"/>
    <property type="match status" value="1"/>
</dbReference>
<reference key="1">
    <citation type="journal article" date="2007" name="J. Biol. Chem.">
        <title>Functional analysis of norcoclaurine synthase in Coptis japonica.</title>
        <authorList>
            <person name="Minami H."/>
            <person name="Dubouzet E."/>
            <person name="Iwasa K."/>
            <person name="Sato F."/>
        </authorList>
    </citation>
    <scope>NUCLEOTIDE SEQUENCE [MRNA]</scope>
    <scope>FUNCTION</scope>
    <scope>INHIBITION</scope>
    <source>
        <strain>cv. dissecta</strain>
    </source>
</reference>
<name>NCS2_COPJA</name>
<keyword id="KW-0017">Alkaloid metabolism</keyword>
<keyword id="KW-0378">Hydrolase</keyword>
<keyword id="KW-0732">Signal</keyword>
<comment type="function">
    <text evidence="3">Involved in the biosynthesis of the common precursor of all benzylisoquinoline alkaloids such as morphine, sanguinarine, codeine or berberine. Condenses dopamine and pyruvic acid or 4-hydroxyphenylpyruvate.</text>
</comment>
<comment type="catalytic activity">
    <reaction evidence="1">
        <text>(4-hydroxyphenyl)acetaldehyde + dopamine = (S)-norcoclaurine + H2O</text>
        <dbReference type="Rhea" id="RHEA:16173"/>
        <dbReference type="ChEBI" id="CHEBI:15377"/>
        <dbReference type="ChEBI" id="CHEBI:15621"/>
        <dbReference type="ChEBI" id="CHEBI:58253"/>
        <dbReference type="ChEBI" id="CHEBI:59905"/>
        <dbReference type="EC" id="3.5.99.14"/>
    </reaction>
</comment>
<comment type="activity regulation">
    <text>Not inhibited by O-phenanthroline or EDTA.</text>
</comment>
<comment type="similarity">
    <text evidence="4">Belongs to the BetVI family.</text>
</comment>
<gene>
    <name type="primary">PR10A</name>
</gene>
<accession>A2A1A1</accession>
<evidence type="ECO:0000250" key="1">
    <source>
        <dbReference type="UniProtKB" id="Q67A25"/>
    </source>
</evidence>
<evidence type="ECO:0000255" key="2"/>
<evidence type="ECO:0000269" key="3">
    <source>
    </source>
</evidence>
<evidence type="ECO:0000305" key="4"/>
<protein>
    <recommendedName>
        <fullName>S-norcoclaurine synthase 2</fullName>
        <ecNumber evidence="1">3.5.99.14</ecNumber>
    </recommendedName>
    <alternativeName>
        <fullName>Pathogenesis related protein 10A</fullName>
        <shortName>CjPR10A</shortName>
    </alternativeName>
</protein>
<organism>
    <name type="scientific">Coptis japonica</name>
    <name type="common">Japanese goldthread</name>
    <dbReference type="NCBI Taxonomy" id="3442"/>
    <lineage>
        <taxon>Eukaryota</taxon>
        <taxon>Viridiplantae</taxon>
        <taxon>Streptophyta</taxon>
        <taxon>Embryophyta</taxon>
        <taxon>Tracheophyta</taxon>
        <taxon>Spermatophyta</taxon>
        <taxon>Magnoliopsida</taxon>
        <taxon>Ranunculales</taxon>
        <taxon>Ranunculaceae</taxon>
        <taxon>Coptidoideae</taxon>
        <taxon>Coptis</taxon>
    </lineage>
</organism>
<proteinExistence type="evidence at transcript level"/>
<sequence>MRMEVVLVVFLMFIGTINCERLIFNGRPLLHRVTKEETVMLYHELEVAASADEVWSVEGSPELGLHLPDLLPAGIFAKFEITGDGGEGSILDMTFPPGQFPHHYREKFVFFDHKNRYKLVEQIDGDFFDLGVTYYMDTIRVVATGPDSCVIKSTTEYHVKPEFAKIVKPLIDTVPLAIMSEAIAKVVLENKHKSSE</sequence>